<feature type="signal peptide" evidence="3">
    <location>
        <begin position="1"/>
        <end position="25"/>
    </location>
</feature>
<feature type="chain" id="PRO_5008430337" description="Pectinesterase inhibitor 5">
    <location>
        <begin position="26"/>
        <end position="179"/>
    </location>
</feature>
<feature type="disulfide bond" evidence="1">
    <location>
        <begin position="35"/>
        <end position="44"/>
    </location>
</feature>
<feature type="disulfide bond" evidence="1">
    <location>
        <begin position="101"/>
        <end position="141"/>
    </location>
</feature>
<gene>
    <name evidence="5" type="primary">PMEI5</name>
    <name evidence="7" type="ordered locus">At2g31430</name>
</gene>
<protein>
    <recommendedName>
        <fullName evidence="6">Pectinesterase inhibitor 5</fullName>
    </recommendedName>
    <alternativeName>
        <fullName evidence="5">Pectin methylesterase inhibitor 5</fullName>
        <shortName evidence="5">AtPMEI5</shortName>
    </alternativeName>
</protein>
<keyword id="KW-0052">Apoplast</keyword>
<keyword id="KW-1015">Disulfide bond</keyword>
<keyword id="KW-1185">Reference proteome</keyword>
<keyword id="KW-0964">Secreted</keyword>
<keyword id="KW-0732">Signal</keyword>
<organism>
    <name type="scientific">Arabidopsis thaliana</name>
    <name type="common">Mouse-ear cress</name>
    <dbReference type="NCBI Taxonomy" id="3702"/>
    <lineage>
        <taxon>Eukaryota</taxon>
        <taxon>Viridiplantae</taxon>
        <taxon>Streptophyta</taxon>
        <taxon>Embryophyta</taxon>
        <taxon>Tracheophyta</taxon>
        <taxon>Spermatophyta</taxon>
        <taxon>Magnoliopsida</taxon>
        <taxon>eudicotyledons</taxon>
        <taxon>Gunneridae</taxon>
        <taxon>Pentapetalae</taxon>
        <taxon>rosids</taxon>
        <taxon>malvids</taxon>
        <taxon>Brassicales</taxon>
        <taxon>Brassicaceae</taxon>
        <taxon>Camelineae</taxon>
        <taxon>Arabidopsis</taxon>
    </lineage>
</organism>
<reference key="1">
    <citation type="journal article" date="1999" name="Nature">
        <title>Sequence and analysis of chromosome 2 of the plant Arabidopsis thaliana.</title>
        <authorList>
            <person name="Lin X."/>
            <person name="Kaul S."/>
            <person name="Rounsley S.D."/>
            <person name="Shea T.P."/>
            <person name="Benito M.-I."/>
            <person name="Town C.D."/>
            <person name="Fujii C.Y."/>
            <person name="Mason T.M."/>
            <person name="Bowman C.L."/>
            <person name="Barnstead M.E."/>
            <person name="Feldblyum T.V."/>
            <person name="Buell C.R."/>
            <person name="Ketchum K.A."/>
            <person name="Lee J.J."/>
            <person name="Ronning C.M."/>
            <person name="Koo H.L."/>
            <person name="Moffat K.S."/>
            <person name="Cronin L.A."/>
            <person name="Shen M."/>
            <person name="Pai G."/>
            <person name="Van Aken S."/>
            <person name="Umayam L."/>
            <person name="Tallon L.J."/>
            <person name="Gill J.E."/>
            <person name="Adams M.D."/>
            <person name="Carrera A.J."/>
            <person name="Creasy T.H."/>
            <person name="Goodman H.M."/>
            <person name="Somerville C.R."/>
            <person name="Copenhaver G.P."/>
            <person name="Preuss D."/>
            <person name="Nierman W.C."/>
            <person name="White O."/>
            <person name="Eisen J.A."/>
            <person name="Salzberg S.L."/>
            <person name="Fraser C.M."/>
            <person name="Venter J.C."/>
        </authorList>
    </citation>
    <scope>NUCLEOTIDE SEQUENCE [LARGE SCALE GENOMIC DNA]</scope>
    <source>
        <strain>cv. Columbia</strain>
    </source>
</reference>
<reference key="2">
    <citation type="journal article" date="2017" name="Plant J.">
        <title>Araport11: a complete reannotation of the Arabidopsis thaliana reference genome.</title>
        <authorList>
            <person name="Cheng C.Y."/>
            <person name="Krishnakumar V."/>
            <person name="Chan A.P."/>
            <person name="Thibaud-Nissen F."/>
            <person name="Schobel S."/>
            <person name="Town C.D."/>
        </authorList>
    </citation>
    <scope>GENOME REANNOTATION</scope>
    <source>
        <strain>cv. Columbia</strain>
    </source>
</reference>
<reference key="3">
    <citation type="journal article" date="2002" name="Plant Physiol.">
        <title>Cloning and sequencing of cDNAs for hypothetical genes from chromosome 2 of Arabidopsis.</title>
        <authorList>
            <person name="Xiao Y.-L."/>
            <person name="Malik M."/>
            <person name="Whitelaw C.A."/>
            <person name="Town C.D."/>
        </authorList>
    </citation>
    <scope>NUCLEOTIDE SEQUENCE [LARGE SCALE MRNA]</scope>
    <source>
        <strain>cv. Columbia</strain>
    </source>
</reference>
<reference key="4">
    <citation type="submission" date="2004-10" db="EMBL/GenBank/DDBJ databases">
        <authorList>
            <person name="Underwood B.A."/>
            <person name="Xiao Y.-L."/>
            <person name="Moskal W.A. Jr."/>
            <person name="Monaghan E.L."/>
            <person name="Wang W."/>
            <person name="Redman J.C."/>
            <person name="Wu H.C."/>
            <person name="Utterback T."/>
            <person name="Town C.D."/>
        </authorList>
    </citation>
    <scope>NUCLEOTIDE SEQUENCE [LARGE SCALE MRNA]</scope>
    <source>
        <strain>cv. Columbia</strain>
    </source>
</reference>
<reference key="5">
    <citation type="journal article" date="2013" name="Plant Physiol.">
        <title>Demethylesterification of cell wall pectins in Arabidopsis plays a role in seed germination.</title>
        <authorList>
            <person name="Mueller K."/>
            <person name="Levesque-Tremblay G."/>
            <person name="Bartels S."/>
            <person name="Weitbrecht K."/>
            <person name="Wormit A."/>
            <person name="Usadel B."/>
            <person name="Haughn G."/>
            <person name="Kermode A.R."/>
        </authorList>
    </citation>
    <scope>FUNCTION</scope>
    <scope>TISSUE SPECIFICITY</scope>
</reference>
<sequence>MATMLINHMLFLTSLLIVVFPVANAIPARDIDKLCKETTDVPFCLKYLGTDPRIPAARDLTDVLLIAITQSKMQVDDATTHIDRVRRKFNGPHGRRRIEVCKTNYGIASARFHTAWELGLQKSFWDVEKLARIGTNAVIDCENVWRRDGPIQTSPLTFYNMNVFKLSGIILLIFNKLVT</sequence>
<dbReference type="EMBL" id="AC007169">
    <property type="protein sequence ID" value="AAD26476.1"/>
    <property type="molecule type" value="Genomic_DNA"/>
</dbReference>
<dbReference type="EMBL" id="CP002685">
    <property type="protein sequence ID" value="AEC08546.1"/>
    <property type="molecule type" value="Genomic_DNA"/>
</dbReference>
<dbReference type="EMBL" id="AY327264">
    <property type="protein sequence ID" value="AAP92518.1"/>
    <property type="molecule type" value="mRNA"/>
</dbReference>
<dbReference type="EMBL" id="AY327265">
    <property type="protein sequence ID" value="AAP92519.1"/>
    <property type="molecule type" value="mRNA"/>
</dbReference>
<dbReference type="EMBL" id="AY773855">
    <property type="protein sequence ID" value="AAV63884.1"/>
    <property type="molecule type" value="mRNA"/>
</dbReference>
<dbReference type="PIR" id="F84720">
    <property type="entry name" value="F84720"/>
</dbReference>
<dbReference type="RefSeq" id="NP_180701.1">
    <property type="nucleotide sequence ID" value="NM_128700.4"/>
</dbReference>
<dbReference type="SMR" id="Q9SIC6"/>
<dbReference type="FunCoup" id="Q9SIC6">
    <property type="interactions" value="2"/>
</dbReference>
<dbReference type="STRING" id="3702.Q9SIC6"/>
<dbReference type="PaxDb" id="3702-AT2G31430.1"/>
<dbReference type="ProteomicsDB" id="236647"/>
<dbReference type="EnsemblPlants" id="AT2G31430.1">
    <property type="protein sequence ID" value="AT2G31430.1"/>
    <property type="gene ID" value="AT2G31430"/>
</dbReference>
<dbReference type="GeneID" id="817701"/>
<dbReference type="Gramene" id="AT2G31430.1">
    <property type="protein sequence ID" value="AT2G31430.1"/>
    <property type="gene ID" value="AT2G31430"/>
</dbReference>
<dbReference type="KEGG" id="ath:AT2G31430"/>
<dbReference type="Araport" id="AT2G31430"/>
<dbReference type="TAIR" id="AT2G31430">
    <property type="gene designation" value="PMEI5"/>
</dbReference>
<dbReference type="eggNOG" id="ENOG502SR8P">
    <property type="taxonomic scope" value="Eukaryota"/>
</dbReference>
<dbReference type="HOGENOM" id="CLU_1505481_0_0_1"/>
<dbReference type="InParanoid" id="Q9SIC6"/>
<dbReference type="OMA" id="CTATIFL"/>
<dbReference type="PhylomeDB" id="Q9SIC6"/>
<dbReference type="PRO" id="PR:Q9SIC6"/>
<dbReference type="Proteomes" id="UP000006548">
    <property type="component" value="Chromosome 2"/>
</dbReference>
<dbReference type="ExpressionAtlas" id="Q9SIC6">
    <property type="expression patterns" value="baseline and differential"/>
</dbReference>
<dbReference type="GO" id="GO:0048046">
    <property type="term" value="C:apoplast"/>
    <property type="evidence" value="ECO:0007669"/>
    <property type="project" value="UniProtKB-SubCell"/>
</dbReference>
<dbReference type="GO" id="GO:0046910">
    <property type="term" value="F:pectinesterase inhibitor activity"/>
    <property type="evidence" value="ECO:0000314"/>
    <property type="project" value="UniProtKB"/>
</dbReference>
<dbReference type="GO" id="GO:0010029">
    <property type="term" value="P:regulation of seed germination"/>
    <property type="evidence" value="ECO:0000315"/>
    <property type="project" value="UniProtKB"/>
</dbReference>
<dbReference type="CDD" id="cd15797">
    <property type="entry name" value="PMEI"/>
    <property type="match status" value="1"/>
</dbReference>
<dbReference type="FunFam" id="1.20.140.40:FF:000008">
    <property type="entry name" value="Invertase/pectin methylesterase inhibitor family protein"/>
    <property type="match status" value="1"/>
</dbReference>
<dbReference type="Gene3D" id="1.20.140.40">
    <property type="entry name" value="Invertase/pectin methylesterase inhibitor family protein"/>
    <property type="match status" value="1"/>
</dbReference>
<dbReference type="InterPro" id="IPR035513">
    <property type="entry name" value="Invertase/methylesterase_inhib"/>
</dbReference>
<dbReference type="InterPro" id="IPR052421">
    <property type="entry name" value="PCW_Enzyme_Inhibitor"/>
</dbReference>
<dbReference type="InterPro" id="IPR006501">
    <property type="entry name" value="Pectinesterase_inhib_dom"/>
</dbReference>
<dbReference type="InterPro" id="IPR034086">
    <property type="entry name" value="PMEI_plant"/>
</dbReference>
<dbReference type="NCBIfam" id="TIGR01614">
    <property type="entry name" value="PME_inhib"/>
    <property type="match status" value="1"/>
</dbReference>
<dbReference type="PANTHER" id="PTHR36710:SF18">
    <property type="entry name" value="PECTINESTERASE INHIBITOR 5-RELATED"/>
    <property type="match status" value="1"/>
</dbReference>
<dbReference type="PANTHER" id="PTHR36710">
    <property type="entry name" value="PECTINESTERASE INHIBITOR-LIKE"/>
    <property type="match status" value="1"/>
</dbReference>
<dbReference type="Pfam" id="PF04043">
    <property type="entry name" value="PMEI"/>
    <property type="match status" value="1"/>
</dbReference>
<dbReference type="SMART" id="SM00856">
    <property type="entry name" value="PMEI"/>
    <property type="match status" value="1"/>
</dbReference>
<dbReference type="SUPFAM" id="SSF101148">
    <property type="entry name" value="Plant invertase/pectin methylesterase inhibitor"/>
    <property type="match status" value="1"/>
</dbReference>
<accession>Q9SIC6</accession>
<accession>Q7XJ30</accession>
<comment type="function">
    <text evidence="4">Pectin methylesterase (PME) inhibitor that targets PME from seeds and modulates PME activity and pectin methylesterification during seed germination.</text>
</comment>
<comment type="subcellular location">
    <subcellularLocation>
        <location evidence="2">Secreted</location>
        <location evidence="2">Extracellular space</location>
        <location evidence="2">Apoplast</location>
    </subcellularLocation>
</comment>
<comment type="tissue specificity">
    <text evidence="4">Expressed in seeds, buds, and mature flowers.</text>
</comment>
<comment type="similarity">
    <text evidence="6">Belongs to the PMEI family.</text>
</comment>
<evidence type="ECO:0000250" key="1">
    <source>
        <dbReference type="UniProtKB" id="Q9LNF2"/>
    </source>
</evidence>
<evidence type="ECO:0000250" key="2">
    <source>
        <dbReference type="UniProtKB" id="Q9STY5"/>
    </source>
</evidence>
<evidence type="ECO:0000255" key="3"/>
<evidence type="ECO:0000269" key="4">
    <source>
    </source>
</evidence>
<evidence type="ECO:0000303" key="5">
    <source>
    </source>
</evidence>
<evidence type="ECO:0000305" key="6"/>
<evidence type="ECO:0000312" key="7">
    <source>
        <dbReference type="Araport" id="AT2G31430"/>
    </source>
</evidence>
<name>PMEI5_ARATH</name>
<proteinExistence type="evidence at transcript level"/>